<accession>P16046</accession>
<reference key="1">
    <citation type="journal article" date="1991" name="J. Virol.">
        <title>Cytomegalovirus assembly protein nested gene family: four 3'-coterminal transcripts encode four in-frame, overlapping proteins.</title>
        <authorList>
            <person name="Welch A.R."/>
            <person name="McNally L.M."/>
            <person name="Gibson W."/>
        </authorList>
    </citation>
    <scope>NUCLEOTIDE SEQUENCE [GENOMIC DNA]</scope>
</reference>
<reference key="2">
    <citation type="submission" date="2000-11" db="EMBL/GenBank/DDBJ databases">
        <authorList>
            <person name="Brignole E."/>
            <person name="Gibson W."/>
        </authorList>
    </citation>
    <scope>SEQUENCE REVISION TO 501</scope>
</reference>
<reference key="3">
    <citation type="journal article" date="1989" name="J. Virol.">
        <title>Primate cytomegalovirus assembly protein: genome location and nucleotide sequence.</title>
        <authorList>
            <person name="Robson L."/>
            <person name="Gibson W."/>
        </authorList>
    </citation>
    <scope>NUCLEOTIDE SEQUENCE [MRNA] OF ISOFORM PAP</scope>
</reference>
<reference key="4">
    <citation type="journal article" date="1991" name="Proc. Natl. Acad. Sci. U.S.A.">
        <title>A herpesvirus maturational proteinase, assemblin: identification of its gene, putative active site domain, and cleavage site.</title>
        <authorList>
            <person name="Welch A.R."/>
            <person name="Woods A.S."/>
            <person name="McNally L.M."/>
            <person name="Cotter R.J."/>
            <person name="Gibson W."/>
        </authorList>
    </citation>
    <scope>CHARACTERIZATION OF ASSEMBLIN</scope>
</reference>
<reference key="5">
    <citation type="journal article" date="1998" name="J. Virol.">
        <title>Cytomegalovirus assembly protein precursor and proteinase precursor contain two nuclear localization signals that mediate their own nuclear translocation and that of the major capsid protein.</title>
        <authorList>
            <person name="Plafker S.M."/>
            <person name="Gibson W."/>
        </authorList>
    </citation>
    <scope>SUBCELLULAR LOCATION</scope>
</reference>
<protein>
    <recommendedName>
        <fullName evidence="2">Capsid scaffolding protein</fullName>
    </recommendedName>
    <alternativeName>
        <fullName>Capsid protein P40</fullName>
    </alternativeName>
    <alternativeName>
        <fullName evidence="2">Protease precursor</fullName>
        <shortName evidence="2">pPR</shortName>
    </alternativeName>
    <component>
        <recommendedName>
            <fullName evidence="2">Assemblin</fullName>
            <ecNumber evidence="2">3.4.21.97</ecNumber>
        </recommendedName>
        <alternativeName>
            <fullName evidence="2">Protease</fullName>
            <shortName evidence="2">Pr</shortName>
        </alternativeName>
    </component>
    <component>
        <recommendedName>
            <fullName evidence="2">Assembly protein</fullName>
            <shortName evidence="2">AP</shortName>
        </recommendedName>
        <alternativeName>
            <fullName evidence="2">Capsid assembly protein</fullName>
        </alternativeName>
    </component>
</protein>
<gene>
    <name type="primary">UL80</name>
    <name type="synonym">APNG</name>
</gene>
<keyword id="KW-0877">Alternative promoter usage</keyword>
<keyword id="KW-1035">Host cytoplasm</keyword>
<keyword id="KW-1048">Host nucleus</keyword>
<keyword id="KW-0378">Hydrolase</keyword>
<keyword id="KW-0597">Phosphoprotein</keyword>
<keyword id="KW-0645">Protease</keyword>
<keyword id="KW-0720">Serine protease</keyword>
<keyword id="KW-0118">Viral capsid assembly</keyword>
<keyword id="KW-1188">Viral release from host cell</keyword>
<name>SCAF_SCMVC</name>
<organism>
    <name type="scientific">Simian cytomegalovirus (strain Colburn)</name>
    <dbReference type="NCBI Taxonomy" id="50292"/>
    <lineage>
        <taxon>Viruses</taxon>
        <taxon>Duplodnaviria</taxon>
        <taxon>Heunggongvirae</taxon>
        <taxon>Peploviricota</taxon>
        <taxon>Herviviricetes</taxon>
        <taxon>Herpesvirales</taxon>
        <taxon>Orthoherpesviridae</taxon>
        <taxon>Betaherpesvirinae</taxon>
        <taxon>Cytomegalovirus</taxon>
        <taxon>Cytomegalovirus cercopithecinebeta5</taxon>
    </lineage>
</organism>
<comment type="function">
    <molecule>Capsid scaffolding protein</molecule>
    <text evidence="2">Acts as a scaffold protein by binding major capsid protein in the cytoplasm, inducing the nuclear localization of both proteins. Multimerizes in the nucleus such as major capsid protein forms the icosahedral T=16 capsid. Autocatalytic cleavage releases the assembly protein, and subsequently abolishes interaction with major capsid protein. Cleavages products are evicted from the capsid before or during DNA packaging.</text>
</comment>
<comment type="function">
    <molecule>Assemblin</molecule>
    <text evidence="2">Protease that plays an essential role in virion assembly within the nucleus. Catalyzes the cleavage of the assembly protein after formation of the spherical procapsid. By that cleavage, the capsid matures and gains its icosahedral shape. The cleavage sites seem to include -Ala-Ser-, -Ala-Ala-, as well as Ala-Thr bonds. Assemblin and cleavages products are evicted from the capsid before or during DNA packaging.</text>
</comment>
<comment type="function">
    <molecule>Assembly protein</molecule>
    <text evidence="2">Plays a major role in capsid assembly. Acts as a scaffold protein by binding major capsid protein. Multimerizes in the nucleus such as major capsid protein forms the icosahedral T=16 capsid. Cleaved by assemblin after capsid completion. The cleavages products are evicted from the capsid before or during DNA packaging.</text>
</comment>
<comment type="catalytic activity">
    <molecule>Assemblin</molecule>
    <reaction evidence="2">
        <text>Cleaves -Ala-|-Ser- and -Ala-|-Ala- bonds in the scaffold protein.</text>
        <dbReference type="EC" id="3.4.21.97"/>
    </reaction>
</comment>
<comment type="subunit">
    <molecule>Capsid scaffolding protein</molecule>
    <text evidence="2">Homomultimer. Interacts with major capsid protein.</text>
</comment>
<comment type="subunit">
    <molecule>Assemblin</molecule>
    <text evidence="2">Exists in a monomer-dimer equilibrium with the dimer being the active species.</text>
</comment>
<comment type="subunit">
    <molecule>Assembly protein</molecule>
    <text evidence="2">Homomultimer. Interacts with major capsid protein.</text>
</comment>
<comment type="subcellular location">
    <molecule>Capsid scaffolding protein</molecule>
    <subcellularLocation>
        <location evidence="2">Host cytoplasm</location>
    </subcellularLocation>
</comment>
<comment type="subcellular location">
    <molecule>Assemblin</molecule>
    <subcellularLocation>
        <location evidence="2">Host nucleus</location>
    </subcellularLocation>
</comment>
<comment type="subcellular location">
    <molecule>Assembly protein</molecule>
    <subcellularLocation>
        <location evidence="2">Host nucleus</location>
    </subcellularLocation>
</comment>
<comment type="alternative products">
    <event type="alternative promoter"/>
    <isoform>
        <id>P16046-1</id>
        <name>Capsid scaffolding protein</name>
        <name>pPR</name>
        <sequence type="displayed"/>
    </isoform>
    <isoform>
        <id>P16046-2</id>
        <name>APNG.7 protein</name>
        <sequence type="described" ref="VSP_037428"/>
    </isoform>
    <isoform>
        <id>P16046-3</id>
        <name>pAP</name>
        <name>Assembly protein</name>
        <name>APGN.5 protein</name>
        <sequence type="described" ref="VSP_037427"/>
    </isoform>
    <isoform>
        <id>P16046-4</id>
        <name>APNG.4 protein</name>
        <sequence type="described" ref="VSP_037426"/>
    </isoform>
</comment>
<comment type="domain">
    <text evidence="2">Region of interaction between pPR and pAP is called Amino conserved domain (ACD). The region of interaction with major capsid protein is called carboxyl conserved domain (CCD).</text>
</comment>
<comment type="PTM">
    <molecule>Capsid scaffolding protein</molecule>
    <text evidence="2">Capsid scaffolding protein is cleaved by assemblin after formation of the spherical procapsid. As a result, the capsid obtains its mature, icosahedral shape. Cleavages occur at two or more sites: release (R-site) and maturation (M-site).</text>
</comment>
<comment type="similarity">
    <text evidence="2">Belongs to the herpesviridae capsid scaffolding protein family.</text>
</comment>
<feature type="chain" id="PRO_0000027289" description="Capsid scaffolding protein">
    <location>
        <begin position="1"/>
        <end position="589"/>
    </location>
</feature>
<feature type="chain" id="PRO_0000027290" description="Assemblin" evidence="2">
    <location>
        <begin position="1"/>
        <end position="249"/>
    </location>
</feature>
<feature type="chain" id="PRO_0000027292" description="Assembly protein" evidence="2">
    <location>
        <begin position="250"/>
        <end position="589"/>
    </location>
</feature>
<feature type="region of interest" description="Disordered" evidence="3">
    <location>
        <begin position="264"/>
        <end position="283"/>
    </location>
</feature>
<feature type="region of interest" description="Interaction with pAP" evidence="2">
    <location>
        <begin position="307"/>
        <end position="326"/>
    </location>
</feature>
<feature type="region of interest" description="Disordered" evidence="3">
    <location>
        <begin position="421"/>
        <end position="478"/>
    </location>
</feature>
<feature type="region of interest" description="Disordered" evidence="3">
    <location>
        <begin position="514"/>
        <end position="552"/>
    </location>
</feature>
<feature type="region of interest" description="Interaction with major capsid protein" evidence="2">
    <location>
        <begin position="569"/>
        <end position="589"/>
    </location>
</feature>
<feature type="short sequence motif" description="Nuclear localization signal 1">
    <location>
        <begin position="428"/>
        <end position="433"/>
    </location>
</feature>
<feature type="short sequence motif" description="Nuclear localization signal 2">
    <location>
        <begin position="453"/>
        <end position="459"/>
    </location>
</feature>
<feature type="compositionally biased region" description="Basic and acidic residues" evidence="3">
    <location>
        <begin position="264"/>
        <end position="273"/>
    </location>
</feature>
<feature type="compositionally biased region" description="Basic residues" evidence="3">
    <location>
        <begin position="453"/>
        <end position="462"/>
    </location>
</feature>
<feature type="compositionally biased region" description="Low complexity" evidence="3">
    <location>
        <begin position="514"/>
        <end position="543"/>
    </location>
</feature>
<feature type="active site" description="Charge relay system" evidence="2">
    <location>
        <position position="47"/>
    </location>
</feature>
<feature type="active site" description="Charge relay system" evidence="2">
    <location>
        <position position="118"/>
    </location>
</feature>
<feature type="active site" description="Charge relay system" evidence="2">
    <location>
        <position position="142"/>
    </location>
</feature>
<feature type="site" description="Cleavage; by assemblin; Internal site" evidence="1">
    <location>
        <begin position="127"/>
        <end position="128"/>
    </location>
</feature>
<feature type="site" description="Cleavage; by assemblin; Release site" evidence="2">
    <location>
        <begin position="249"/>
        <end position="250"/>
    </location>
</feature>
<feature type="site" description="Cleavage; by assemblin; Maturation site" evidence="1">
    <location>
        <begin position="556"/>
        <end position="557"/>
    </location>
</feature>
<feature type="splice variant" id="VSP_037426" description="In isoform APNG.4 protein." evidence="4">
    <location>
        <begin position="1"/>
        <end position="348"/>
    </location>
</feature>
<feature type="splice variant" id="VSP_037427" description="In isoform pAP." evidence="4">
    <location>
        <begin position="1"/>
        <end position="280"/>
    </location>
</feature>
<feature type="splice variant" id="VSP_037428" description="In isoform APNG.7 protein." evidence="4">
    <location>
        <begin position="1"/>
        <end position="165"/>
    </location>
</feature>
<feature type="sequence conflict" description="In Ref. 3; AAA85777." evidence="4" ref="3">
    <original>A</original>
    <variation>R</variation>
    <location>
        <position position="501"/>
    </location>
</feature>
<feature type="sequence conflict" description="In Ref. 3." evidence="4" ref="3">
    <original>A</original>
    <variation>AS</variation>
    <location>
        <position position="537"/>
    </location>
</feature>
<proteinExistence type="evidence at protein level"/>
<organismHost>
    <name type="scientific">Macaca</name>
    <name type="common">macaques</name>
    <dbReference type="NCBI Taxonomy" id="9539"/>
</organismHost>
<dbReference type="EC" id="3.4.21.97" evidence="2"/>
<dbReference type="EMBL" id="M64627">
    <property type="protein sequence ID" value="AAA46065.2"/>
    <property type="molecule type" value="Genomic_DNA"/>
</dbReference>
<dbReference type="EMBL" id="M24205">
    <property type="protein sequence ID" value="AAA85777.1"/>
    <property type="molecule type" value="mRNA"/>
</dbReference>
<dbReference type="PIR" id="A40414">
    <property type="entry name" value="WMBECB"/>
</dbReference>
<dbReference type="SMR" id="P16046"/>
<dbReference type="GO" id="GO:0030430">
    <property type="term" value="C:host cell cytoplasm"/>
    <property type="evidence" value="ECO:0007669"/>
    <property type="project" value="UniProtKB-SubCell"/>
</dbReference>
<dbReference type="GO" id="GO:0042025">
    <property type="term" value="C:host cell nucleus"/>
    <property type="evidence" value="ECO:0007669"/>
    <property type="project" value="UniProtKB-SubCell"/>
</dbReference>
<dbReference type="GO" id="GO:0042802">
    <property type="term" value="F:identical protein binding"/>
    <property type="evidence" value="ECO:0007669"/>
    <property type="project" value="UniProtKB-UniRule"/>
</dbReference>
<dbReference type="GO" id="GO:0004252">
    <property type="term" value="F:serine-type endopeptidase activity"/>
    <property type="evidence" value="ECO:0007669"/>
    <property type="project" value="UniProtKB-UniRule"/>
</dbReference>
<dbReference type="GO" id="GO:0039708">
    <property type="term" value="P:nuclear capsid assembly"/>
    <property type="evidence" value="ECO:0000314"/>
    <property type="project" value="UniProtKB"/>
</dbReference>
<dbReference type="GO" id="GO:0006508">
    <property type="term" value="P:proteolysis"/>
    <property type="evidence" value="ECO:0007669"/>
    <property type="project" value="UniProtKB-KW"/>
</dbReference>
<dbReference type="GO" id="GO:0019076">
    <property type="term" value="P:viral release from host cell"/>
    <property type="evidence" value="ECO:0007669"/>
    <property type="project" value="UniProtKB-UniRule"/>
</dbReference>
<dbReference type="FunFam" id="3.20.16.10:FF:000001">
    <property type="entry name" value="Capsid scaffolding protein"/>
    <property type="match status" value="1"/>
</dbReference>
<dbReference type="Gene3D" id="3.20.16.10">
    <property type="entry name" value="Herpesvirus/Caudovirus protease domain"/>
    <property type="match status" value="1"/>
</dbReference>
<dbReference type="HAMAP" id="MF_04008">
    <property type="entry name" value="HSV_SCAF"/>
    <property type="match status" value="1"/>
</dbReference>
<dbReference type="InterPro" id="IPR035443">
    <property type="entry name" value="Herpes_virus_sf"/>
</dbReference>
<dbReference type="InterPro" id="IPR001847">
    <property type="entry name" value="Peptidase_S21"/>
</dbReference>
<dbReference type="Pfam" id="PF00716">
    <property type="entry name" value="Peptidase_S21"/>
    <property type="match status" value="1"/>
</dbReference>
<dbReference type="PRINTS" id="PR00236">
    <property type="entry name" value="HSVCAPSIDP40"/>
</dbReference>
<dbReference type="SUPFAM" id="SSF50789">
    <property type="entry name" value="Herpes virus serine proteinase, assemblin"/>
    <property type="match status" value="1"/>
</dbReference>
<evidence type="ECO:0000250" key="1">
    <source>
        <dbReference type="UniProtKB" id="P16753"/>
    </source>
</evidence>
<evidence type="ECO:0000255" key="2">
    <source>
        <dbReference type="HAMAP-Rule" id="MF_04008"/>
    </source>
</evidence>
<evidence type="ECO:0000256" key="3">
    <source>
        <dbReference type="SAM" id="MobiDB-lite"/>
    </source>
</evidence>
<evidence type="ECO:0000305" key="4"/>
<sequence>MADPVYVGGFLVRYDEPPGEAELFLPSGVVDRWLRDCRGPLPLNVNHDESATVGYVAGLQNVRAGLFCLGRVTSPKFLDIVQKASEKSELVSRGPPSESSLRPDGVLEFLSGSYSGLSLSSRRDINAADGAAGDAETACFKHVALCSVGRRRGTLAVYGRQPDWVMERFPDLTEADREALRNQLSGSGEVAAKESAESSAAAAVDPFQSDSYGLLGNSVDALYIQERLPKLRYDKRLVGVTARESYVKASVSPAEQETCDIKVEKERPKEPEQSHVPTESMSHPMSAVATPAASTVAPSQAPLALAHDGVYLPKDAFFSLIGASRPLAEAAGARAAYPAVPPPPAYPVMNYEDPSSRHFDYSAWLRRPAYDAVPPLPPPPVMPMPYRRRDPMMEEAERAAWERGYAPSAYDHYVNNGSWSRSRSGALKRRRERDASSDEEEDMSFPGEADHGKARKRLKAHHGRDNNNSGSDAKGDRYDDIREALQELKREMLAVRQIAPAALLAPAQLATPVASPTTTTSHQAEASEPQASTAAAAPSTASSHGSKSAERGVVNASCRVAPPLEAVNPPKDMVDLNRRLFVAALNKME</sequence>